<name>CEBPE_SHEEP</name>
<dbReference type="EMBL" id="AJ222689">
    <property type="protein sequence ID" value="CAA10944.1"/>
    <property type="molecule type" value="Genomic_DNA"/>
</dbReference>
<dbReference type="SMR" id="O77728"/>
<dbReference type="STRING" id="9940.ENSOARP00000020798"/>
<dbReference type="PaxDb" id="9940-ENSOARP00000020798"/>
<dbReference type="eggNOG" id="KOG3119">
    <property type="taxonomic scope" value="Eukaryota"/>
</dbReference>
<dbReference type="Proteomes" id="UP000002356">
    <property type="component" value="Unplaced"/>
</dbReference>
<dbReference type="GO" id="GO:0005634">
    <property type="term" value="C:nucleus"/>
    <property type="evidence" value="ECO:0007669"/>
    <property type="project" value="UniProtKB-SubCell"/>
</dbReference>
<dbReference type="GO" id="GO:0000981">
    <property type="term" value="F:DNA-binding transcription factor activity, RNA polymerase II-specific"/>
    <property type="evidence" value="ECO:0007669"/>
    <property type="project" value="TreeGrafter"/>
</dbReference>
<dbReference type="GO" id="GO:0000978">
    <property type="term" value="F:RNA polymerase II cis-regulatory region sequence-specific DNA binding"/>
    <property type="evidence" value="ECO:0007669"/>
    <property type="project" value="TreeGrafter"/>
</dbReference>
<dbReference type="GO" id="GO:0006351">
    <property type="term" value="P:DNA-templated transcription"/>
    <property type="evidence" value="ECO:0007669"/>
    <property type="project" value="InterPro"/>
</dbReference>
<dbReference type="GO" id="GO:0030099">
    <property type="term" value="P:myeloid cell differentiation"/>
    <property type="evidence" value="ECO:0007669"/>
    <property type="project" value="TreeGrafter"/>
</dbReference>
<dbReference type="CDD" id="cd14715">
    <property type="entry name" value="bZIP_CEBPE"/>
    <property type="match status" value="1"/>
</dbReference>
<dbReference type="FunFam" id="1.20.5.170:FF:000028">
    <property type="entry name" value="CCAAT/enhancer-binding protein beta"/>
    <property type="match status" value="1"/>
</dbReference>
<dbReference type="Gene3D" id="1.20.5.170">
    <property type="match status" value="1"/>
</dbReference>
<dbReference type="InterPro" id="IPR004827">
    <property type="entry name" value="bZIP"/>
</dbReference>
<dbReference type="InterPro" id="IPR046347">
    <property type="entry name" value="bZIP_sf"/>
</dbReference>
<dbReference type="InterPro" id="IPR031106">
    <property type="entry name" value="C/EBP"/>
</dbReference>
<dbReference type="InterPro" id="IPR016468">
    <property type="entry name" value="C/EBP_chordates"/>
</dbReference>
<dbReference type="PANTHER" id="PTHR23334">
    <property type="entry name" value="CCAAT/ENHANCER BINDING PROTEIN"/>
    <property type="match status" value="1"/>
</dbReference>
<dbReference type="PANTHER" id="PTHR23334:SF27">
    <property type="entry name" value="CCAAT_ENHANCER-BINDING PROTEIN EPSILON"/>
    <property type="match status" value="1"/>
</dbReference>
<dbReference type="Pfam" id="PF07716">
    <property type="entry name" value="bZIP_2"/>
    <property type="match status" value="1"/>
</dbReference>
<dbReference type="PIRSF" id="PIRSF005879">
    <property type="entry name" value="CCAAT/enhancer-binding"/>
    <property type="match status" value="1"/>
</dbReference>
<dbReference type="SMART" id="SM00338">
    <property type="entry name" value="BRLZ"/>
    <property type="match status" value="1"/>
</dbReference>
<dbReference type="SUPFAM" id="SSF57959">
    <property type="entry name" value="Leucine zipper domain"/>
    <property type="match status" value="1"/>
</dbReference>
<dbReference type="PROSITE" id="PS50217">
    <property type="entry name" value="BZIP"/>
    <property type="match status" value="1"/>
</dbReference>
<reference key="1">
    <citation type="journal article" date="1998" name="J. Anim. Sci.">
        <title>Nucleotide sequence of ovine C/EBPepsilon gene.</title>
        <authorList>
            <person name="Sabatakos G."/>
            <person name="Kousteni S."/>
            <person name="Cryer A."/>
            <person name="Ramji D.P."/>
        </authorList>
    </citation>
    <scope>NUCLEOTIDE SEQUENCE [MRNA]</scope>
    <source>
        <tissue>Lung</tissue>
    </source>
</reference>
<evidence type="ECO:0000250" key="1"/>
<evidence type="ECO:0000250" key="2">
    <source>
        <dbReference type="UniProtKB" id="P56261"/>
    </source>
</evidence>
<evidence type="ECO:0000250" key="3">
    <source>
        <dbReference type="UniProtKB" id="Q15744"/>
    </source>
</evidence>
<evidence type="ECO:0000250" key="4">
    <source>
        <dbReference type="UniProtKB" id="Q6PZD9"/>
    </source>
</evidence>
<evidence type="ECO:0000255" key="5">
    <source>
        <dbReference type="PROSITE-ProRule" id="PRU00978"/>
    </source>
</evidence>
<evidence type="ECO:0000256" key="6">
    <source>
        <dbReference type="SAM" id="MobiDB-lite"/>
    </source>
</evidence>
<evidence type="ECO:0000305" key="7"/>
<protein>
    <recommendedName>
        <fullName>CCAAT/enhancer-binding protein epsilon</fullName>
        <shortName>C/EBP epsilon</shortName>
    </recommendedName>
</protein>
<gene>
    <name type="primary">CEBPE</name>
</gene>
<keyword id="KW-0010">Activator</keyword>
<keyword id="KW-0238">DNA-binding</keyword>
<keyword id="KW-1017">Isopeptide bond</keyword>
<keyword id="KW-0539">Nucleus</keyword>
<keyword id="KW-0597">Phosphoprotein</keyword>
<keyword id="KW-1185">Reference proteome</keyword>
<keyword id="KW-0804">Transcription</keyword>
<keyword id="KW-0805">Transcription regulation</keyword>
<keyword id="KW-0832">Ubl conjugation</keyword>
<accession>O77728</accession>
<feature type="chain" id="PRO_0000076627" description="CCAAT/enhancer-binding protein epsilon">
    <location>
        <begin position="1"/>
        <end position="281"/>
    </location>
</feature>
<feature type="domain" description="bZIP" evidence="5">
    <location>
        <begin position="204"/>
        <end position="267"/>
    </location>
</feature>
<feature type="region of interest" description="Disordered" evidence="6">
    <location>
        <begin position="1"/>
        <end position="30"/>
    </location>
</feature>
<feature type="region of interest" description="Basic motif" evidence="5">
    <location>
        <begin position="208"/>
        <end position="228"/>
    </location>
</feature>
<feature type="region of interest" description="Leucine-zipper" evidence="5">
    <location>
        <begin position="230"/>
        <end position="237"/>
    </location>
</feature>
<feature type="modified residue" description="Phosphoserine" evidence="4">
    <location>
        <position position="181"/>
    </location>
</feature>
<feature type="cross-link" description="Glycyl lysine isopeptide (Lys-Gly) (interchain with G-Cter in SUMO2)" evidence="3">
    <location>
        <position position="121"/>
    </location>
</feature>
<sequence length="281" mass="30639">MSHGTYYECEPRAGQQPLEFSGARAGPGELGDMCEHEASIDLSAYIESGEEQLLSDLFAVKPAPEARELKGPGTPAFPHYLPADPRPFTYPPHTFGPDRKALGPGIYSSPGSYDPRAVAVKEEPRGPEGSRGASRSGYNPLQYQVAHCGQTAMHLPPGLASPSQPLRVLKAPLAAAAPPCSPLLKAPSPAGPSHKGKKAVNKDSLEYRLRRERNNIAVRKSRDKAKRRILETQQKVLEYMAENERLRSRVEQLTQELDTLRNLFRQIPEAANLIKGVGGCS</sequence>
<comment type="function">
    <text evidence="3">Transcriptional activator. C/EBP are DNA-binding proteins that recognize two different motifs: the CCAAT homology common to many promoters and the enhanced core homology common to many enhancers. Required for the promyelocyte-myelocyte transition in myeloid differentiation.</text>
</comment>
<comment type="subunit">
    <text evidence="2 3">Binds DNA as a homodimer and as a heterodimer. Can form stable heterodimers with CEBPA, CEBPB and CEBPD (By similarity). Interacts with GATA1 and SPI1 (By similarity). Interacts with SMARCD2 (By similarity).</text>
</comment>
<comment type="subcellular location">
    <subcellularLocation>
        <location evidence="5">Nucleus</location>
    </subcellularLocation>
</comment>
<comment type="PTM">
    <text evidence="1">Phosphorylated.</text>
</comment>
<comment type="similarity">
    <text evidence="7">Belongs to the bZIP family. C/EBP subfamily.</text>
</comment>
<organism>
    <name type="scientific">Ovis aries</name>
    <name type="common">Sheep</name>
    <dbReference type="NCBI Taxonomy" id="9940"/>
    <lineage>
        <taxon>Eukaryota</taxon>
        <taxon>Metazoa</taxon>
        <taxon>Chordata</taxon>
        <taxon>Craniata</taxon>
        <taxon>Vertebrata</taxon>
        <taxon>Euteleostomi</taxon>
        <taxon>Mammalia</taxon>
        <taxon>Eutheria</taxon>
        <taxon>Laurasiatheria</taxon>
        <taxon>Artiodactyla</taxon>
        <taxon>Ruminantia</taxon>
        <taxon>Pecora</taxon>
        <taxon>Bovidae</taxon>
        <taxon>Caprinae</taxon>
        <taxon>Ovis</taxon>
    </lineage>
</organism>
<proteinExistence type="evidence at transcript level"/>